<evidence type="ECO:0000255" key="1"/>
<evidence type="ECO:0000255" key="2">
    <source>
        <dbReference type="PROSITE-ProRule" id="PRU00498"/>
    </source>
</evidence>
<evidence type="ECO:0000255" key="3">
    <source>
        <dbReference type="PROSITE-ProRule" id="PRU00521"/>
    </source>
</evidence>
<evidence type="ECO:0000255" key="4">
    <source>
        <dbReference type="RuleBase" id="RU000688"/>
    </source>
</evidence>
<evidence type="ECO:0000269" key="5">
    <source>
    </source>
</evidence>
<evidence type="ECO:0000303" key="6">
    <source>
    </source>
</evidence>
<evidence type="ECO:0000305" key="7"/>
<evidence type="ECO:0000312" key="8">
    <source>
        <dbReference type="EMBL" id="EEN45215.1"/>
    </source>
</evidence>
<evidence type="ECO:0000312" key="9">
    <source>
        <dbReference type="Proteomes" id="UP000001554"/>
    </source>
</evidence>
<organism evidence="9">
    <name type="scientific">Branchiostoma floridae</name>
    <name type="common">Florida lancelet</name>
    <name type="synonym">Amphioxus</name>
    <dbReference type="NCBI Taxonomy" id="7739"/>
    <lineage>
        <taxon>Eukaryota</taxon>
        <taxon>Metazoa</taxon>
        <taxon>Chordata</taxon>
        <taxon>Cephalochordata</taxon>
        <taxon>Leptocardii</taxon>
        <taxon>Amphioxiformes</taxon>
        <taxon>Branchiostomatidae</taxon>
        <taxon>Branchiostoma</taxon>
    </lineage>
</organism>
<reference evidence="9" key="1">
    <citation type="journal article" date="2008" name="Nature">
        <title>The amphioxus genome and the evolution of the chordate karyotype.</title>
        <authorList>
            <person name="Putnam N.H."/>
            <person name="Butts T."/>
            <person name="Ferrier D.E.K."/>
            <person name="Furlong R.F."/>
            <person name="Hellsten U."/>
            <person name="Kawashima T."/>
            <person name="Robinson-Rechavi M."/>
            <person name="Shoguchi E."/>
            <person name="Terry A."/>
            <person name="Yu J.-K."/>
            <person name="Benito-Gutierrez E.L."/>
            <person name="Dubchak I."/>
            <person name="Garcia-Fernandez J."/>
            <person name="Gibson-Brown J.J."/>
            <person name="Grigoriev I.V."/>
            <person name="Horton A.C."/>
            <person name="de Jong P.J."/>
            <person name="Jurka J."/>
            <person name="Kapitonov V.V."/>
            <person name="Kohara Y."/>
            <person name="Kuroki Y."/>
            <person name="Lindquist E."/>
            <person name="Lucas S."/>
            <person name="Osoegawa K."/>
            <person name="Pennacchio L.A."/>
            <person name="Salamov A.A."/>
            <person name="Satou Y."/>
            <person name="Sauka-Spengler T."/>
            <person name="Schmutz J."/>
            <person name="Shin-I T."/>
            <person name="Toyoda A."/>
            <person name="Bronner-Fraser M."/>
            <person name="Fujiyama A."/>
            <person name="Holland L.Z."/>
            <person name="Holland P.W.H."/>
            <person name="Satoh N."/>
            <person name="Rokhsar D.S."/>
        </authorList>
    </citation>
    <scope>NUCLEOTIDE SEQUENCE [LARGE SCALE GENOMIC DNA]</scope>
    <source>
        <strain evidence="9">S238N-H82</strain>
    </source>
</reference>
<reference evidence="7" key="2">
    <citation type="journal article" date="2015" name="Gen. Comp. Endocrinol.">
        <title>Characterization of peptide QRFP (26RFa) and its receptor from amphioxus, Branchiostoma floridae.</title>
        <authorList>
            <person name="Xu B."/>
            <person name="Bergqvist C.A."/>
            <person name="Sundstroem G."/>
            <person name="Lundell I."/>
            <person name="Vaudry H."/>
            <person name="Leprince J."/>
            <person name="Larhammar D."/>
        </authorList>
    </citation>
    <scope>FUNCTION</scope>
    <scope>SUBCELLULAR LOCATION</scope>
</reference>
<dbReference type="EMBL" id="GG666661">
    <property type="protein sequence ID" value="EEN45215.1"/>
    <property type="molecule type" value="Genomic_DNA"/>
</dbReference>
<dbReference type="RefSeq" id="XP_002589204.1">
    <property type="nucleotide sequence ID" value="XM_002589158.1"/>
</dbReference>
<dbReference type="SMR" id="C3ZQF9"/>
<dbReference type="GlyCosmos" id="C3ZQF9">
    <property type="glycosylation" value="2 sites, No reported glycans"/>
</dbReference>
<dbReference type="eggNOG" id="KOG3656">
    <property type="taxonomic scope" value="Eukaryota"/>
</dbReference>
<dbReference type="InParanoid" id="C3ZQF9"/>
<dbReference type="Proteomes" id="UP000001554">
    <property type="component" value="Unplaced"/>
</dbReference>
<dbReference type="GO" id="GO:0005886">
    <property type="term" value="C:plasma membrane"/>
    <property type="evidence" value="ECO:0000314"/>
    <property type="project" value="UniProtKB"/>
</dbReference>
<dbReference type="GO" id="GO:0004930">
    <property type="term" value="F:G protein-coupled receptor activity"/>
    <property type="evidence" value="ECO:0000314"/>
    <property type="project" value="UniProtKB"/>
</dbReference>
<dbReference type="GO" id="GO:0004983">
    <property type="term" value="F:neuropeptide Y receptor activity"/>
    <property type="evidence" value="ECO:0007669"/>
    <property type="project" value="InterPro"/>
</dbReference>
<dbReference type="GO" id="GO:0032870">
    <property type="term" value="P:cellular response to hormone stimulus"/>
    <property type="evidence" value="ECO:0000318"/>
    <property type="project" value="GO_Central"/>
</dbReference>
<dbReference type="GO" id="GO:1901653">
    <property type="term" value="P:cellular response to peptide"/>
    <property type="evidence" value="ECO:0000314"/>
    <property type="project" value="UniProtKB"/>
</dbReference>
<dbReference type="GO" id="GO:0007186">
    <property type="term" value="P:G protein-coupled receptor signaling pathway"/>
    <property type="evidence" value="ECO:0000318"/>
    <property type="project" value="GO_Central"/>
</dbReference>
<dbReference type="FunFam" id="1.20.1070.10:FF:000227">
    <property type="entry name" value="Pyroglutamylated RFamide peptide receptor a"/>
    <property type="match status" value="1"/>
</dbReference>
<dbReference type="Gene3D" id="1.20.1070.10">
    <property type="entry name" value="Rhodopsin 7-helix transmembrane proteins"/>
    <property type="match status" value="1"/>
</dbReference>
<dbReference type="InterPro" id="IPR000276">
    <property type="entry name" value="GPCR_Rhodpsn"/>
</dbReference>
<dbReference type="InterPro" id="IPR017452">
    <property type="entry name" value="GPCR_Rhodpsn_7TM"/>
</dbReference>
<dbReference type="InterPro" id="IPR000611">
    <property type="entry name" value="NPY_rcpt"/>
</dbReference>
<dbReference type="PANTHER" id="PTHR45695">
    <property type="entry name" value="LEUCOKININ RECEPTOR-RELATED"/>
    <property type="match status" value="1"/>
</dbReference>
<dbReference type="PANTHER" id="PTHR45695:SF20">
    <property type="entry name" value="PYROGLUTAMYLATED RFAMIDE PEPTIDE RECEPTOR"/>
    <property type="match status" value="1"/>
</dbReference>
<dbReference type="Pfam" id="PF00001">
    <property type="entry name" value="7tm_1"/>
    <property type="match status" value="1"/>
</dbReference>
<dbReference type="PRINTS" id="PR00237">
    <property type="entry name" value="GPCRRHODOPSN"/>
</dbReference>
<dbReference type="PRINTS" id="PR01012">
    <property type="entry name" value="NRPEPTIDEYR"/>
</dbReference>
<dbReference type="SMART" id="SM01381">
    <property type="entry name" value="7TM_GPCR_Srsx"/>
    <property type="match status" value="1"/>
</dbReference>
<dbReference type="SUPFAM" id="SSF81321">
    <property type="entry name" value="Family A G protein-coupled receptor-like"/>
    <property type="match status" value="1"/>
</dbReference>
<dbReference type="PROSITE" id="PS00237">
    <property type="entry name" value="G_PROTEIN_RECEP_F1_1"/>
    <property type="match status" value="1"/>
</dbReference>
<dbReference type="PROSITE" id="PS50262">
    <property type="entry name" value="G_PROTEIN_RECEP_F1_2"/>
    <property type="match status" value="1"/>
</dbReference>
<proteinExistence type="inferred from homology"/>
<accession>C3ZQF9</accession>
<comment type="function">
    <text evidence="5">Receptor for QRFP-like peptide. The activity of this receptor is mediated by G proteins which activate a phosphatidyl-inositol-calcium second messenger system.</text>
</comment>
<comment type="subcellular location">
    <subcellularLocation>
        <location evidence="5">Cell membrane</location>
        <topology evidence="1">Multi-pass membrane protein</topology>
    </subcellularLocation>
</comment>
<comment type="similarity">
    <text evidence="4">Belongs to the G-protein coupled receptor 1 family.</text>
</comment>
<keyword id="KW-1003">Cell membrane</keyword>
<keyword id="KW-1015">Disulfide bond</keyword>
<keyword id="KW-0297">G-protein coupled receptor</keyword>
<keyword id="KW-0325">Glycoprotein</keyword>
<keyword id="KW-0472">Membrane</keyword>
<keyword id="KW-0675">Receptor</keyword>
<keyword id="KW-1185">Reference proteome</keyword>
<keyword id="KW-0807">Transducer</keyword>
<keyword id="KW-0812">Transmembrane</keyword>
<keyword id="KW-1133">Transmembrane helix</keyword>
<protein>
    <recommendedName>
        <fullName evidence="6">QRFP-like peptide receptor</fullName>
    </recommendedName>
</protein>
<sequence length="380" mass="43187">MMLGNMTFTQTILHELLRQHNMTKNEFIERFGLPPLVYVPELSPGAKTVTLVFYVIIFLAALLGNTLVVVVVWKNKVMRTTMNIFICSLAASDLLITIVCIPVTLMQNMLQNWIMGDFMCKLVPFIQTIAVASSILTLTGIAIERYYAIIHPLKVKYLLSKTRAGIILALVWVVSVGVATPMLFVHKAEEIHDFLYEQRFVTCQEKWWGQTQQTSYTIFNLVVLFIIPLLTMTSLYIRIAHRLWVQQPVGVTGNFAHGNSVRRKRQAVKMLVVVVLLFAVCWLPYHTVTVMNELTGLRLEEKSAKLLIAIVQLIAFSNSFNNPVVYAILNENFKKNFMTMLRCRVNRVSPQQVTPNTLQTPLEQSTRSCRLPAGAPNQQI</sequence>
<gene>
    <name evidence="6" type="primary">QRFPR</name>
    <name evidence="8" type="ORF">BRAFLDRAFT_74637</name>
</gene>
<name>QRFPR_BRAFL</name>
<feature type="chain" id="PRO_0000442014" description="QRFP-like peptide receptor">
    <location>
        <begin position="1"/>
        <end position="380"/>
    </location>
</feature>
<feature type="topological domain" description="Extracellular" evidence="7">
    <location>
        <begin position="1"/>
        <end position="51"/>
    </location>
</feature>
<feature type="transmembrane region" description="Helical; Name=1" evidence="1">
    <location>
        <begin position="52"/>
        <end position="72"/>
    </location>
</feature>
<feature type="topological domain" description="Cytoplasmic" evidence="7">
    <location>
        <begin position="73"/>
        <end position="83"/>
    </location>
</feature>
<feature type="transmembrane region" description="Helical; Name=2" evidence="1">
    <location>
        <begin position="84"/>
        <end position="104"/>
    </location>
</feature>
<feature type="topological domain" description="Extracellular" evidence="7">
    <location>
        <begin position="105"/>
        <end position="122"/>
    </location>
</feature>
<feature type="transmembrane region" description="Helical; Name=3" evidence="1">
    <location>
        <begin position="123"/>
        <end position="143"/>
    </location>
</feature>
<feature type="topological domain" description="Cytoplasmic" evidence="7">
    <location>
        <begin position="144"/>
        <end position="164"/>
    </location>
</feature>
<feature type="transmembrane region" description="Helical; Name=4" evidence="1">
    <location>
        <begin position="165"/>
        <end position="185"/>
    </location>
</feature>
<feature type="topological domain" description="Extracellular" evidence="7">
    <location>
        <begin position="186"/>
        <end position="216"/>
    </location>
</feature>
<feature type="transmembrane region" description="Helical; Name=5" evidence="1">
    <location>
        <begin position="217"/>
        <end position="237"/>
    </location>
</feature>
<feature type="topological domain" description="Cytoplasmic" evidence="7">
    <location>
        <begin position="238"/>
        <end position="269"/>
    </location>
</feature>
<feature type="transmembrane region" description="Helical; Name=6" evidence="1">
    <location>
        <begin position="270"/>
        <end position="290"/>
    </location>
</feature>
<feature type="topological domain" description="Extracellular" evidence="7">
    <location>
        <begin position="291"/>
        <end position="305"/>
    </location>
</feature>
<feature type="transmembrane region" description="Helical; Name=7" evidence="1">
    <location>
        <begin position="306"/>
        <end position="326"/>
    </location>
</feature>
<feature type="topological domain" description="Cytoplasmic" evidence="7">
    <location>
        <begin position="327"/>
        <end position="380"/>
    </location>
</feature>
<feature type="glycosylation site" description="N-linked (GlcNAc...) asparagine" evidence="2">
    <location>
        <position position="5"/>
    </location>
</feature>
<feature type="glycosylation site" description="N-linked (GlcNAc...) asparagine" evidence="2">
    <location>
        <position position="21"/>
    </location>
</feature>
<feature type="disulfide bond" evidence="3">
    <location>
        <begin position="120"/>
        <end position="203"/>
    </location>
</feature>